<feature type="chain" id="PRO_0000079479" description="Spermatogenesis-associated protein 25">
    <location>
        <begin position="1"/>
        <end position="226"/>
    </location>
</feature>
<feature type="transmembrane region" description="Helical" evidence="1">
    <location>
        <begin position="153"/>
        <end position="173"/>
    </location>
</feature>
<feature type="sequence conflict" description="In Ref. 3; AAI16356." evidence="3" ref="3">
    <original>F</original>
    <variation>V</variation>
    <location>
        <position position="185"/>
    </location>
</feature>
<keyword id="KW-0221">Differentiation</keyword>
<keyword id="KW-0472">Membrane</keyword>
<keyword id="KW-1185">Reference proteome</keyword>
<keyword id="KW-0744">Spermatogenesis</keyword>
<keyword id="KW-0812">Transmembrane</keyword>
<keyword id="KW-1133">Transmembrane helix</keyword>
<organism>
    <name type="scientific">Mus musculus</name>
    <name type="common">Mouse</name>
    <dbReference type="NCBI Taxonomy" id="10090"/>
    <lineage>
        <taxon>Eukaryota</taxon>
        <taxon>Metazoa</taxon>
        <taxon>Chordata</taxon>
        <taxon>Craniata</taxon>
        <taxon>Vertebrata</taxon>
        <taxon>Euteleostomi</taxon>
        <taxon>Mammalia</taxon>
        <taxon>Eutheria</taxon>
        <taxon>Euarchontoglires</taxon>
        <taxon>Glires</taxon>
        <taxon>Rodentia</taxon>
        <taxon>Myomorpha</taxon>
        <taxon>Muroidea</taxon>
        <taxon>Muridae</taxon>
        <taxon>Murinae</taxon>
        <taxon>Mus</taxon>
        <taxon>Mus</taxon>
    </lineage>
</organism>
<gene>
    <name type="primary">Spata25</name>
    <name type="synonym">Tsg23</name>
</gene>
<sequence>MSYFVSPQSHLGLLPSGQGGAASSGSSLGLYSPAEPVVVAPGGLGPLSQKAEQVAPAAQAWGPTLAVPEARGCSGGVSWETPRRKEHNRYCPKLPPMRPLESLGWADPCSRSRAPYLGGPSRPRPLLLCGLSPGVLPISSEAGGKEAASQPDICILTLAMMIAGIPTVPVPGLREEDLIRAAQAFMMAHPEPEGAVEGVQWEQAHAHAHMASGQMPLVRSRRGSCL</sequence>
<name>SPT25_MOUSE</name>
<dbReference type="EMBL" id="AK006145">
    <property type="protein sequence ID" value="BAB24430.1"/>
    <property type="molecule type" value="mRNA"/>
</dbReference>
<dbReference type="EMBL" id="AL591495">
    <property type="status" value="NOT_ANNOTATED_CDS"/>
    <property type="molecule type" value="Genomic_DNA"/>
</dbReference>
<dbReference type="EMBL" id="BC116355">
    <property type="protein sequence ID" value="AAI16356.1"/>
    <property type="molecule type" value="mRNA"/>
</dbReference>
<dbReference type="CCDS" id="CCDS50799.1"/>
<dbReference type="RefSeq" id="NP_083646.1">
    <property type="nucleotide sequence ID" value="NM_029370.1"/>
</dbReference>
<dbReference type="STRING" id="10090.ENSMUSP00000017911"/>
<dbReference type="PaxDb" id="10090-ENSMUSP00000017911"/>
<dbReference type="ProteomicsDB" id="257388"/>
<dbReference type="Antibodypedia" id="53799">
    <property type="antibodies" value="65 antibodies from 7 providers"/>
</dbReference>
<dbReference type="Ensembl" id="ENSMUST00000017911.4">
    <property type="protein sequence ID" value="ENSMUSP00000017911.4"/>
    <property type="gene ID" value="ENSMUSG00000017767.4"/>
</dbReference>
<dbReference type="GeneID" id="75642"/>
<dbReference type="KEGG" id="mmu:75642"/>
<dbReference type="UCSC" id="uc008nwj.2">
    <property type="organism name" value="mouse"/>
</dbReference>
<dbReference type="AGR" id="MGI:1922892"/>
<dbReference type="CTD" id="128497"/>
<dbReference type="MGI" id="MGI:1922892">
    <property type="gene designation" value="Spata25"/>
</dbReference>
<dbReference type="VEuPathDB" id="HostDB:ENSMUSG00000017767"/>
<dbReference type="eggNOG" id="ENOG502SUEH">
    <property type="taxonomic scope" value="Eukaryota"/>
</dbReference>
<dbReference type="GeneTree" id="ENSGT00390000018626"/>
<dbReference type="HOGENOM" id="CLU_120284_0_0_1"/>
<dbReference type="InParanoid" id="Q9DA57"/>
<dbReference type="OMA" id="GWEDGCS"/>
<dbReference type="OrthoDB" id="9038306at2759"/>
<dbReference type="PhylomeDB" id="Q9DA57"/>
<dbReference type="TreeFam" id="TF336974"/>
<dbReference type="BioGRID-ORCS" id="75642">
    <property type="hits" value="0 hits in 77 CRISPR screens"/>
</dbReference>
<dbReference type="PRO" id="PR:Q9DA57"/>
<dbReference type="Proteomes" id="UP000000589">
    <property type="component" value="Chromosome 2"/>
</dbReference>
<dbReference type="RNAct" id="Q9DA57">
    <property type="molecule type" value="protein"/>
</dbReference>
<dbReference type="Bgee" id="ENSMUSG00000017767">
    <property type="expression patterns" value="Expressed in spermatid and 28 other cell types or tissues"/>
</dbReference>
<dbReference type="GO" id="GO:0016020">
    <property type="term" value="C:membrane"/>
    <property type="evidence" value="ECO:0007669"/>
    <property type="project" value="UniProtKB-SubCell"/>
</dbReference>
<dbReference type="GO" id="GO:0030154">
    <property type="term" value="P:cell differentiation"/>
    <property type="evidence" value="ECO:0007669"/>
    <property type="project" value="UniProtKB-KW"/>
</dbReference>
<dbReference type="GO" id="GO:0007283">
    <property type="term" value="P:spermatogenesis"/>
    <property type="evidence" value="ECO:0000270"/>
    <property type="project" value="UniProtKB"/>
</dbReference>
<dbReference type="InterPro" id="IPR029192">
    <property type="entry name" value="SPATA25"/>
</dbReference>
<dbReference type="PANTHER" id="PTHR36857">
    <property type="entry name" value="SPERMATOGENESIS-ASSOCIATED PROTEIN 25"/>
    <property type="match status" value="1"/>
</dbReference>
<dbReference type="PANTHER" id="PTHR36857:SF1">
    <property type="entry name" value="SPERMATOGENESIS-ASSOCIATED PROTEIN 25"/>
    <property type="match status" value="1"/>
</dbReference>
<dbReference type="Pfam" id="PF15218">
    <property type="entry name" value="SPATA25"/>
    <property type="match status" value="1"/>
</dbReference>
<proteinExistence type="evidence at transcript level"/>
<comment type="function">
    <text>May play a role in spermatogenesis.</text>
</comment>
<comment type="subcellular location">
    <subcellularLocation>
        <location evidence="3">Membrane</location>
        <topology evidence="3">Single-pass membrane protein</topology>
    </subcellularLocation>
</comment>
<comment type="tissue specificity">
    <text evidence="2">Expressed strongly in testis, weakly in epididymis and not detected in other tissues.</text>
</comment>
<comment type="developmental stage">
    <text evidence="2">Expression is detected at day 15 after birth and gradually increases from day 15 to 5 months. Expression is found in round spermatids with little expression in spermatogonia.</text>
</comment>
<comment type="similarity">
    <text evidence="3">Belongs to the SPATA25 family.</text>
</comment>
<evidence type="ECO:0000255" key="1"/>
<evidence type="ECO:0000269" key="2">
    <source>
    </source>
</evidence>
<evidence type="ECO:0000305" key="3"/>
<accession>Q9DA57</accession>
<accession>A2A5J4</accession>
<accession>Q14B41</accession>
<protein>
    <recommendedName>
        <fullName>Spermatogenesis-associated protein 25</fullName>
    </recommendedName>
    <alternativeName>
        <fullName>Testis-specific gene 23 protein</fullName>
    </alternativeName>
</protein>
<reference key="1">
    <citation type="journal article" date="2005" name="Science">
        <title>The transcriptional landscape of the mammalian genome.</title>
        <authorList>
            <person name="Carninci P."/>
            <person name="Kasukawa T."/>
            <person name="Katayama S."/>
            <person name="Gough J."/>
            <person name="Frith M.C."/>
            <person name="Maeda N."/>
            <person name="Oyama R."/>
            <person name="Ravasi T."/>
            <person name="Lenhard B."/>
            <person name="Wells C."/>
            <person name="Kodzius R."/>
            <person name="Shimokawa K."/>
            <person name="Bajic V.B."/>
            <person name="Brenner S.E."/>
            <person name="Batalov S."/>
            <person name="Forrest A.R."/>
            <person name="Zavolan M."/>
            <person name="Davis M.J."/>
            <person name="Wilming L.G."/>
            <person name="Aidinis V."/>
            <person name="Allen J.E."/>
            <person name="Ambesi-Impiombato A."/>
            <person name="Apweiler R."/>
            <person name="Aturaliya R.N."/>
            <person name="Bailey T.L."/>
            <person name="Bansal M."/>
            <person name="Baxter L."/>
            <person name="Beisel K.W."/>
            <person name="Bersano T."/>
            <person name="Bono H."/>
            <person name="Chalk A.M."/>
            <person name="Chiu K.P."/>
            <person name="Choudhary V."/>
            <person name="Christoffels A."/>
            <person name="Clutterbuck D.R."/>
            <person name="Crowe M.L."/>
            <person name="Dalla E."/>
            <person name="Dalrymple B.P."/>
            <person name="de Bono B."/>
            <person name="Della Gatta G."/>
            <person name="di Bernardo D."/>
            <person name="Down T."/>
            <person name="Engstrom P."/>
            <person name="Fagiolini M."/>
            <person name="Faulkner G."/>
            <person name="Fletcher C.F."/>
            <person name="Fukushima T."/>
            <person name="Furuno M."/>
            <person name="Futaki S."/>
            <person name="Gariboldi M."/>
            <person name="Georgii-Hemming P."/>
            <person name="Gingeras T.R."/>
            <person name="Gojobori T."/>
            <person name="Green R.E."/>
            <person name="Gustincich S."/>
            <person name="Harbers M."/>
            <person name="Hayashi Y."/>
            <person name="Hensch T.K."/>
            <person name="Hirokawa N."/>
            <person name="Hill D."/>
            <person name="Huminiecki L."/>
            <person name="Iacono M."/>
            <person name="Ikeo K."/>
            <person name="Iwama A."/>
            <person name="Ishikawa T."/>
            <person name="Jakt M."/>
            <person name="Kanapin A."/>
            <person name="Katoh M."/>
            <person name="Kawasawa Y."/>
            <person name="Kelso J."/>
            <person name="Kitamura H."/>
            <person name="Kitano H."/>
            <person name="Kollias G."/>
            <person name="Krishnan S.P."/>
            <person name="Kruger A."/>
            <person name="Kummerfeld S.K."/>
            <person name="Kurochkin I.V."/>
            <person name="Lareau L.F."/>
            <person name="Lazarevic D."/>
            <person name="Lipovich L."/>
            <person name="Liu J."/>
            <person name="Liuni S."/>
            <person name="McWilliam S."/>
            <person name="Madan Babu M."/>
            <person name="Madera M."/>
            <person name="Marchionni L."/>
            <person name="Matsuda H."/>
            <person name="Matsuzawa S."/>
            <person name="Miki H."/>
            <person name="Mignone F."/>
            <person name="Miyake S."/>
            <person name="Morris K."/>
            <person name="Mottagui-Tabar S."/>
            <person name="Mulder N."/>
            <person name="Nakano N."/>
            <person name="Nakauchi H."/>
            <person name="Ng P."/>
            <person name="Nilsson R."/>
            <person name="Nishiguchi S."/>
            <person name="Nishikawa S."/>
            <person name="Nori F."/>
            <person name="Ohara O."/>
            <person name="Okazaki Y."/>
            <person name="Orlando V."/>
            <person name="Pang K.C."/>
            <person name="Pavan W.J."/>
            <person name="Pavesi G."/>
            <person name="Pesole G."/>
            <person name="Petrovsky N."/>
            <person name="Piazza S."/>
            <person name="Reed J."/>
            <person name="Reid J.F."/>
            <person name="Ring B.Z."/>
            <person name="Ringwald M."/>
            <person name="Rost B."/>
            <person name="Ruan Y."/>
            <person name="Salzberg S.L."/>
            <person name="Sandelin A."/>
            <person name="Schneider C."/>
            <person name="Schoenbach C."/>
            <person name="Sekiguchi K."/>
            <person name="Semple C.A."/>
            <person name="Seno S."/>
            <person name="Sessa L."/>
            <person name="Sheng Y."/>
            <person name="Shibata Y."/>
            <person name="Shimada H."/>
            <person name="Shimada K."/>
            <person name="Silva D."/>
            <person name="Sinclair B."/>
            <person name="Sperling S."/>
            <person name="Stupka E."/>
            <person name="Sugiura K."/>
            <person name="Sultana R."/>
            <person name="Takenaka Y."/>
            <person name="Taki K."/>
            <person name="Tammoja K."/>
            <person name="Tan S.L."/>
            <person name="Tang S."/>
            <person name="Taylor M.S."/>
            <person name="Tegner J."/>
            <person name="Teichmann S.A."/>
            <person name="Ueda H.R."/>
            <person name="van Nimwegen E."/>
            <person name="Verardo R."/>
            <person name="Wei C.L."/>
            <person name="Yagi K."/>
            <person name="Yamanishi H."/>
            <person name="Zabarovsky E."/>
            <person name="Zhu S."/>
            <person name="Zimmer A."/>
            <person name="Hide W."/>
            <person name="Bult C."/>
            <person name="Grimmond S.M."/>
            <person name="Teasdale R.D."/>
            <person name="Liu E.T."/>
            <person name="Brusic V."/>
            <person name="Quackenbush J."/>
            <person name="Wahlestedt C."/>
            <person name="Mattick J.S."/>
            <person name="Hume D.A."/>
            <person name="Kai C."/>
            <person name="Sasaki D."/>
            <person name="Tomaru Y."/>
            <person name="Fukuda S."/>
            <person name="Kanamori-Katayama M."/>
            <person name="Suzuki M."/>
            <person name="Aoki J."/>
            <person name="Arakawa T."/>
            <person name="Iida J."/>
            <person name="Imamura K."/>
            <person name="Itoh M."/>
            <person name="Kato T."/>
            <person name="Kawaji H."/>
            <person name="Kawagashira N."/>
            <person name="Kawashima T."/>
            <person name="Kojima M."/>
            <person name="Kondo S."/>
            <person name="Konno H."/>
            <person name="Nakano K."/>
            <person name="Ninomiya N."/>
            <person name="Nishio T."/>
            <person name="Okada M."/>
            <person name="Plessy C."/>
            <person name="Shibata K."/>
            <person name="Shiraki T."/>
            <person name="Suzuki S."/>
            <person name="Tagami M."/>
            <person name="Waki K."/>
            <person name="Watahiki A."/>
            <person name="Okamura-Oho Y."/>
            <person name="Suzuki H."/>
            <person name="Kawai J."/>
            <person name="Hayashizaki Y."/>
        </authorList>
    </citation>
    <scope>NUCLEOTIDE SEQUENCE [LARGE SCALE MRNA]</scope>
    <source>
        <strain>C57BL/6J</strain>
        <tissue>Testis</tissue>
    </source>
</reference>
<reference key="2">
    <citation type="journal article" date="2009" name="PLoS Biol.">
        <title>Lineage-specific biology revealed by a finished genome assembly of the mouse.</title>
        <authorList>
            <person name="Church D.M."/>
            <person name="Goodstadt L."/>
            <person name="Hillier L.W."/>
            <person name="Zody M.C."/>
            <person name="Goldstein S."/>
            <person name="She X."/>
            <person name="Bult C.J."/>
            <person name="Agarwala R."/>
            <person name="Cherry J.L."/>
            <person name="DiCuccio M."/>
            <person name="Hlavina W."/>
            <person name="Kapustin Y."/>
            <person name="Meric P."/>
            <person name="Maglott D."/>
            <person name="Birtle Z."/>
            <person name="Marques A.C."/>
            <person name="Graves T."/>
            <person name="Zhou S."/>
            <person name="Teague B."/>
            <person name="Potamousis K."/>
            <person name="Churas C."/>
            <person name="Place M."/>
            <person name="Herschleb J."/>
            <person name="Runnheim R."/>
            <person name="Forrest D."/>
            <person name="Amos-Landgraf J."/>
            <person name="Schwartz D.C."/>
            <person name="Cheng Z."/>
            <person name="Lindblad-Toh K."/>
            <person name="Eichler E.E."/>
            <person name="Ponting C.P."/>
        </authorList>
    </citation>
    <scope>NUCLEOTIDE SEQUENCE [LARGE SCALE GENOMIC DNA]</scope>
    <source>
        <strain>C57BL/6J</strain>
    </source>
</reference>
<reference key="3">
    <citation type="journal article" date="2004" name="Genome Res.">
        <title>The status, quality, and expansion of the NIH full-length cDNA project: the Mammalian Gene Collection (MGC).</title>
        <authorList>
            <consortium name="The MGC Project Team"/>
        </authorList>
    </citation>
    <scope>NUCLEOTIDE SEQUENCE [LARGE SCALE MRNA]</scope>
</reference>
<reference key="4">
    <citation type="journal article" date="2009" name="Mol. Hum. Reprod.">
        <title>Developmental expression pattern of a novel gene, TSG23/Tsg23, suggests a role in spermatogenesis.</title>
        <authorList>
            <person name="Zhou Y."/>
            <person name="Qin D."/>
            <person name="Tang A."/>
            <person name="Zhou D."/>
            <person name="Qin J."/>
            <person name="Yan B."/>
            <person name="Diao R."/>
            <person name="Jiang Z."/>
            <person name="Cai Z."/>
            <person name="Gui Y."/>
        </authorList>
    </citation>
    <scope>PROBABLE FUNCTION</scope>
    <scope>TISSUE SPECIFICITY</scope>
    <scope>DEVELOPMENTAL STAGE</scope>
</reference>